<feature type="chain" id="PRO_0000450032" description="Low affinity inorganic phosphate transporter 4">
    <location>
        <begin position="1"/>
        <end position="528"/>
    </location>
</feature>
<feature type="topological domain" description="Cytoplasmic" evidence="9">
    <location>
        <begin position="1"/>
        <end position="18"/>
    </location>
</feature>
<feature type="transmembrane region" description="Helical; Name=1" evidence="1">
    <location>
        <begin position="19"/>
        <end position="39"/>
    </location>
</feature>
<feature type="topological domain" description="Extracellular" evidence="9">
    <location>
        <begin position="40"/>
        <end position="68"/>
    </location>
</feature>
<feature type="transmembrane region" description="Helical; Name=2" evidence="1">
    <location>
        <begin position="69"/>
        <end position="89"/>
    </location>
</feature>
<feature type="topological domain" description="Cytoplasmic" evidence="9">
    <location>
        <begin position="90"/>
        <end position="96"/>
    </location>
</feature>
<feature type="transmembrane region" description="Helical; Name=3" evidence="1">
    <location>
        <begin position="97"/>
        <end position="117"/>
    </location>
</feature>
<feature type="topological domain" description="Extracellular" evidence="9">
    <location>
        <begin position="118"/>
        <end position="122"/>
    </location>
</feature>
<feature type="transmembrane region" description="Helical; Name=4" evidence="1">
    <location>
        <begin position="123"/>
        <end position="143"/>
    </location>
</feature>
<feature type="topological domain" description="Cytoplasmic" evidence="9">
    <location>
        <begin position="144"/>
        <end position="158"/>
    </location>
</feature>
<feature type="transmembrane region" description="Helical; Name=5" evidence="1">
    <location>
        <begin position="159"/>
        <end position="179"/>
    </location>
</feature>
<feature type="topological domain" description="Extracellular" evidence="9">
    <location>
        <begin position="180"/>
        <end position="208"/>
    </location>
</feature>
<feature type="transmembrane region" description="Helical; Name=6" evidence="1">
    <location>
        <begin position="209"/>
        <end position="229"/>
    </location>
</feature>
<feature type="topological domain" description="Cytoplasmic" evidence="9">
    <location>
        <begin position="230"/>
        <end position="292"/>
    </location>
</feature>
<feature type="transmembrane region" description="Helical; Name=7" evidence="1">
    <location>
        <begin position="293"/>
        <end position="313"/>
    </location>
</feature>
<feature type="topological domain" description="Extracellular" evidence="9">
    <location>
        <begin position="314"/>
        <end position="341"/>
    </location>
</feature>
<feature type="transmembrane region" description="Helical; Name=8" evidence="1">
    <location>
        <begin position="342"/>
        <end position="362"/>
    </location>
</feature>
<feature type="topological domain" description="Cytoplasmic" evidence="9">
    <location>
        <begin position="363"/>
        <end position="371"/>
    </location>
</feature>
<feature type="transmembrane region" description="Helical; Name=9" evidence="1">
    <location>
        <begin position="372"/>
        <end position="392"/>
    </location>
</feature>
<feature type="topological domain" description="Extracellular" evidence="9">
    <location>
        <begin position="393"/>
        <end position="401"/>
    </location>
</feature>
<feature type="transmembrane region" description="Helical; Name=10" evidence="1">
    <location>
        <begin position="402"/>
        <end position="422"/>
    </location>
</feature>
<feature type="topological domain" description="Cytoplasmic" evidence="9">
    <location>
        <begin position="423"/>
        <end position="433"/>
    </location>
</feature>
<feature type="transmembrane region" description="Helical; Name=11" evidence="1">
    <location>
        <begin position="434"/>
        <end position="454"/>
    </location>
</feature>
<feature type="topological domain" description="Extracellular" evidence="9">
    <location>
        <begin position="455"/>
        <end position="468"/>
    </location>
</feature>
<feature type="transmembrane region" description="Helical; Name=12" evidence="1">
    <location>
        <begin position="469"/>
        <end position="489"/>
    </location>
</feature>
<feature type="topological domain" description="Cytoplasmic" evidence="9">
    <location>
        <begin position="490"/>
        <end position="528"/>
    </location>
</feature>
<feature type="region of interest" description="Disordered" evidence="2">
    <location>
        <begin position="497"/>
        <end position="528"/>
    </location>
</feature>
<feature type="compositionally biased region" description="Basic and acidic residues" evidence="2">
    <location>
        <begin position="497"/>
        <end position="507"/>
    </location>
</feature>
<gene>
    <name evidence="8" type="primary">PT4</name>
    <name evidence="11" type="ordered locus">MTR_1g028600</name>
    <name evidence="12" type="ORF">MtrunA17_Chr1g0158991</name>
</gene>
<keyword id="KW-1003">Cell membrane</keyword>
<keyword id="KW-0472">Membrane</keyword>
<keyword id="KW-0592">Phosphate transport</keyword>
<keyword id="KW-1185">Reference proteome</keyword>
<keyword id="KW-0769">Symport</keyword>
<keyword id="KW-0812">Transmembrane</keyword>
<keyword id="KW-1133">Transmembrane helix</keyword>
<keyword id="KW-0813">Transport</keyword>
<proteinExistence type="evidence at protein level"/>
<organism>
    <name type="scientific">Medicago truncatula</name>
    <name type="common">Barrel medic</name>
    <name type="synonym">Medicago tribuloides</name>
    <dbReference type="NCBI Taxonomy" id="3880"/>
    <lineage>
        <taxon>Eukaryota</taxon>
        <taxon>Viridiplantae</taxon>
        <taxon>Streptophyta</taxon>
        <taxon>Embryophyta</taxon>
        <taxon>Tracheophyta</taxon>
        <taxon>Spermatophyta</taxon>
        <taxon>Magnoliopsida</taxon>
        <taxon>eudicotyledons</taxon>
        <taxon>Gunneridae</taxon>
        <taxon>Pentapetalae</taxon>
        <taxon>rosids</taxon>
        <taxon>fabids</taxon>
        <taxon>Fabales</taxon>
        <taxon>Fabaceae</taxon>
        <taxon>Papilionoideae</taxon>
        <taxon>50 kb inversion clade</taxon>
        <taxon>NPAAA clade</taxon>
        <taxon>Hologalegina</taxon>
        <taxon>IRL clade</taxon>
        <taxon>Trifolieae</taxon>
        <taxon>Medicago</taxon>
    </lineage>
</organism>
<dbReference type="EMBL" id="AY116210">
    <property type="protein sequence ID" value="AAM76743.1"/>
    <property type="molecule type" value="mRNA"/>
</dbReference>
<dbReference type="EMBL" id="AY116211">
    <property type="protein sequence ID" value="AAM76744.1"/>
    <property type="molecule type" value="Genomic_DNA"/>
</dbReference>
<dbReference type="EMBL" id="CM001217">
    <property type="protein sequence ID" value="KEH40422.1"/>
    <property type="molecule type" value="Genomic_DNA"/>
</dbReference>
<dbReference type="EMBL" id="PSQE01000001">
    <property type="protein sequence ID" value="RHN77834.1"/>
    <property type="molecule type" value="Genomic_DNA"/>
</dbReference>
<dbReference type="RefSeq" id="XP_013466381.1">
    <property type="nucleotide sequence ID" value="XM_013610927.1"/>
</dbReference>
<dbReference type="SMR" id="Q8GSG4"/>
<dbReference type="STRING" id="3880.Q8GSG4"/>
<dbReference type="EnsemblPlants" id="rna1327">
    <property type="protein sequence ID" value="RHN77834.1"/>
    <property type="gene ID" value="gene1327"/>
</dbReference>
<dbReference type="GeneID" id="25482376"/>
<dbReference type="Gramene" id="rna1327">
    <property type="protein sequence ID" value="RHN77834.1"/>
    <property type="gene ID" value="gene1327"/>
</dbReference>
<dbReference type="KEGG" id="mtr:25482376"/>
<dbReference type="HOGENOM" id="CLU_001265_46_14_1"/>
<dbReference type="OrthoDB" id="433512at2759"/>
<dbReference type="Proteomes" id="UP000002051">
    <property type="component" value="Chromosome 1"/>
</dbReference>
<dbReference type="Proteomes" id="UP000265566">
    <property type="component" value="Chromosome 1"/>
</dbReference>
<dbReference type="GO" id="GO:0085042">
    <property type="term" value="C:periarbuscular membrane"/>
    <property type="evidence" value="ECO:0000314"/>
    <property type="project" value="UniProtKB"/>
</dbReference>
<dbReference type="GO" id="GO:0005886">
    <property type="term" value="C:plasma membrane"/>
    <property type="evidence" value="ECO:0007669"/>
    <property type="project" value="UniProtKB-SubCell"/>
</dbReference>
<dbReference type="GO" id="GO:0005315">
    <property type="term" value="F:phosphate transmembrane transporter activity"/>
    <property type="evidence" value="ECO:0007669"/>
    <property type="project" value="InterPro"/>
</dbReference>
<dbReference type="GO" id="GO:0015293">
    <property type="term" value="F:symporter activity"/>
    <property type="evidence" value="ECO:0007669"/>
    <property type="project" value="UniProtKB-KW"/>
</dbReference>
<dbReference type="GO" id="GO:0036377">
    <property type="term" value="P:arbuscular mycorrhizal association"/>
    <property type="evidence" value="ECO:0000315"/>
    <property type="project" value="UniProtKB"/>
</dbReference>
<dbReference type="GO" id="GO:0043562">
    <property type="term" value="P:cellular response to nitrogen levels"/>
    <property type="evidence" value="ECO:0000315"/>
    <property type="project" value="UniProtKB"/>
</dbReference>
<dbReference type="GO" id="GO:0016036">
    <property type="term" value="P:cellular response to phosphate starvation"/>
    <property type="evidence" value="ECO:0000315"/>
    <property type="project" value="UniProtKB"/>
</dbReference>
<dbReference type="GO" id="GO:0010247">
    <property type="term" value="P:detection of phosphate ion"/>
    <property type="evidence" value="ECO:0000315"/>
    <property type="project" value="UniProtKB"/>
</dbReference>
<dbReference type="GO" id="GO:0010311">
    <property type="term" value="P:lateral root formation"/>
    <property type="evidence" value="ECO:0000315"/>
    <property type="project" value="UniProtKB"/>
</dbReference>
<dbReference type="GO" id="GO:0006817">
    <property type="term" value="P:phosphate ion transport"/>
    <property type="evidence" value="ECO:0000314"/>
    <property type="project" value="UniProtKB"/>
</dbReference>
<dbReference type="GO" id="GO:0009610">
    <property type="term" value="P:response to symbiotic fungus"/>
    <property type="evidence" value="ECO:0000270"/>
    <property type="project" value="UniProtKB"/>
</dbReference>
<dbReference type="GO" id="GO:0055085">
    <property type="term" value="P:transmembrane transport"/>
    <property type="evidence" value="ECO:0000314"/>
    <property type="project" value="UniProtKB"/>
</dbReference>
<dbReference type="CDD" id="cd17364">
    <property type="entry name" value="MFS_PhT"/>
    <property type="match status" value="1"/>
</dbReference>
<dbReference type="FunFam" id="1.20.1250.20:FF:000175">
    <property type="entry name" value="Inorganic phosphate transporter 1-6"/>
    <property type="match status" value="1"/>
</dbReference>
<dbReference type="Gene3D" id="1.20.1250.20">
    <property type="entry name" value="MFS general substrate transporter like domains"/>
    <property type="match status" value="1"/>
</dbReference>
<dbReference type="InterPro" id="IPR020846">
    <property type="entry name" value="MFS_dom"/>
</dbReference>
<dbReference type="InterPro" id="IPR005828">
    <property type="entry name" value="MFS_sugar_transport-like"/>
</dbReference>
<dbReference type="InterPro" id="IPR036259">
    <property type="entry name" value="MFS_trans_sf"/>
</dbReference>
<dbReference type="InterPro" id="IPR004738">
    <property type="entry name" value="Phos_permease"/>
</dbReference>
<dbReference type="NCBIfam" id="TIGR00887">
    <property type="entry name" value="2A0109"/>
    <property type="match status" value="1"/>
</dbReference>
<dbReference type="PANTHER" id="PTHR24064">
    <property type="entry name" value="SOLUTE CARRIER FAMILY 22 MEMBER"/>
    <property type="match status" value="1"/>
</dbReference>
<dbReference type="Pfam" id="PF00083">
    <property type="entry name" value="Sugar_tr"/>
    <property type="match status" value="1"/>
</dbReference>
<dbReference type="SUPFAM" id="SSF103473">
    <property type="entry name" value="MFS general substrate transporter"/>
    <property type="match status" value="1"/>
</dbReference>
<dbReference type="PROSITE" id="PS50850">
    <property type="entry name" value="MFS"/>
    <property type="match status" value="1"/>
</dbReference>
<accession>Q8GSG4</accession>
<protein>
    <recommendedName>
        <fullName evidence="8">Low affinity inorganic phosphate transporter 4</fullName>
        <shortName evidence="8">MtPT4</shortName>
        <shortName evidence="9">MtPht1;4</shortName>
    </recommendedName>
    <alternativeName>
        <fullName evidence="9">Arbuscular mycorrhiza-induced phosphate transporter PT4</fullName>
        <shortName evidence="9">AM-induced phosphate transporter PT4</shortName>
    </alternativeName>
    <alternativeName>
        <fullName evidence="9">H(+)/Pi cotransporter PT4</fullName>
    </alternativeName>
</protein>
<reference key="1">
    <citation type="journal article" date="2002" name="Plant Cell">
        <title>A phosphate transporter from Medicago truncatula involved in the acquisition of phosphate released by arbuscular mycorrhizal fungi.</title>
        <authorList>
            <person name="Harrison M.J."/>
            <person name="Dewbre G.R."/>
            <person name="Liu J."/>
        </authorList>
    </citation>
    <scope>NUCLEOTIDE SEQUENCE [GENOMIC DNA / MRNA]</scope>
    <scope>FUNCTION</scope>
    <scope>TRANSPORTER ACTIVITY</scope>
    <scope>BIOPHYSICOCHEMICAL PROPERTIES</scope>
    <scope>TISSUE SPECIFICITY</scope>
    <scope>DEVELOPMENTAL STAGE</scope>
    <scope>SUBCELLULAR LOCATION</scope>
    <scope>INDUCTION BY ARBUSCULAR MYCORRHIZAL FUNGI</scope>
    <source>
        <strain>cv. Jemalong A17</strain>
    </source>
</reference>
<reference key="2">
    <citation type="journal article" date="2011" name="Nature">
        <title>The Medicago genome provides insight into the evolution of rhizobial symbioses.</title>
        <authorList>
            <person name="Young N.D."/>
            <person name="Debelle F."/>
            <person name="Oldroyd G.E.D."/>
            <person name="Geurts R."/>
            <person name="Cannon S.B."/>
            <person name="Udvardi M.K."/>
            <person name="Benedito V.A."/>
            <person name="Mayer K.F.X."/>
            <person name="Gouzy J."/>
            <person name="Schoof H."/>
            <person name="Van de Peer Y."/>
            <person name="Proost S."/>
            <person name="Cook D.R."/>
            <person name="Meyers B.C."/>
            <person name="Spannagl M."/>
            <person name="Cheung F."/>
            <person name="De Mita S."/>
            <person name="Krishnakumar V."/>
            <person name="Gundlach H."/>
            <person name="Zhou S."/>
            <person name="Mudge J."/>
            <person name="Bharti A.K."/>
            <person name="Murray J.D."/>
            <person name="Naoumkina M.A."/>
            <person name="Rosen B."/>
            <person name="Silverstein K.A.T."/>
            <person name="Tang H."/>
            <person name="Rombauts S."/>
            <person name="Zhao P.X."/>
            <person name="Zhou P."/>
            <person name="Barbe V."/>
            <person name="Bardou P."/>
            <person name="Bechner M."/>
            <person name="Bellec A."/>
            <person name="Berger A."/>
            <person name="Berges H."/>
            <person name="Bidwell S."/>
            <person name="Bisseling T."/>
            <person name="Choisne N."/>
            <person name="Couloux A."/>
            <person name="Denny R."/>
            <person name="Deshpande S."/>
            <person name="Dai X."/>
            <person name="Doyle J.J."/>
            <person name="Dudez A.-M."/>
            <person name="Farmer A.D."/>
            <person name="Fouteau S."/>
            <person name="Franken C."/>
            <person name="Gibelin C."/>
            <person name="Gish J."/>
            <person name="Goldstein S."/>
            <person name="Gonzalez A.J."/>
            <person name="Green P.J."/>
            <person name="Hallab A."/>
            <person name="Hartog M."/>
            <person name="Hua A."/>
            <person name="Humphray S.J."/>
            <person name="Jeong D.-H."/>
            <person name="Jing Y."/>
            <person name="Jocker A."/>
            <person name="Kenton S.M."/>
            <person name="Kim D.-J."/>
            <person name="Klee K."/>
            <person name="Lai H."/>
            <person name="Lang C."/>
            <person name="Lin S."/>
            <person name="Macmil S.L."/>
            <person name="Magdelenat G."/>
            <person name="Matthews L."/>
            <person name="McCorrison J."/>
            <person name="Monaghan E.L."/>
            <person name="Mun J.-H."/>
            <person name="Najar F.Z."/>
            <person name="Nicholson C."/>
            <person name="Noirot C."/>
            <person name="O'Bleness M."/>
            <person name="Paule C.R."/>
            <person name="Poulain J."/>
            <person name="Prion F."/>
            <person name="Qin B."/>
            <person name="Qu C."/>
            <person name="Retzel E.F."/>
            <person name="Riddle C."/>
            <person name="Sallet E."/>
            <person name="Samain S."/>
            <person name="Samson N."/>
            <person name="Sanders I."/>
            <person name="Saurat O."/>
            <person name="Scarpelli C."/>
            <person name="Schiex T."/>
            <person name="Segurens B."/>
            <person name="Severin A.J."/>
            <person name="Sherrier D.J."/>
            <person name="Shi R."/>
            <person name="Sims S."/>
            <person name="Singer S.R."/>
            <person name="Sinharoy S."/>
            <person name="Sterck L."/>
            <person name="Viollet A."/>
            <person name="Wang B.-B."/>
            <person name="Wang K."/>
            <person name="Wang M."/>
            <person name="Wang X."/>
            <person name="Warfsmann J."/>
            <person name="Weissenbach J."/>
            <person name="White D.D."/>
            <person name="White J.D."/>
            <person name="Wiley G.B."/>
            <person name="Wincker P."/>
            <person name="Xing Y."/>
            <person name="Yang L."/>
            <person name="Yao Z."/>
            <person name="Ying F."/>
            <person name="Zhai J."/>
            <person name="Zhou L."/>
            <person name="Zuber A."/>
            <person name="Denarie J."/>
            <person name="Dixon R.A."/>
            <person name="May G.D."/>
            <person name="Schwartz D.C."/>
            <person name="Rogers J."/>
            <person name="Quetier F."/>
            <person name="Town C.D."/>
            <person name="Roe B.A."/>
        </authorList>
    </citation>
    <scope>NUCLEOTIDE SEQUENCE [LARGE SCALE GENOMIC DNA]</scope>
    <source>
        <strain>cv. Jemalong A17</strain>
    </source>
</reference>
<reference key="3">
    <citation type="journal article" date="2014" name="BMC Genomics">
        <title>An improved genome release (version Mt4.0) for the model legume Medicago truncatula.</title>
        <authorList>
            <person name="Tang H."/>
            <person name="Krishnakumar V."/>
            <person name="Bidwell S."/>
            <person name="Rosen B."/>
            <person name="Chan A."/>
            <person name="Zhou S."/>
            <person name="Gentzbittel L."/>
            <person name="Childs K.L."/>
            <person name="Yandell M."/>
            <person name="Gundlach H."/>
            <person name="Mayer K.F."/>
            <person name="Schwartz D.C."/>
            <person name="Town C.D."/>
        </authorList>
    </citation>
    <scope>GENOME REANNOTATION</scope>
    <source>
        <strain>cv. Jemalong A17</strain>
    </source>
</reference>
<reference key="4">
    <citation type="journal article" date="2018" name="Nat. Plants">
        <title>Whole-genome landscape of Medicago truncatula symbiotic genes.</title>
        <authorList>
            <person name="Pecrix Y."/>
            <person name="Staton S.E."/>
            <person name="Sallet E."/>
            <person name="Lelandais-Briere C."/>
            <person name="Moreau S."/>
            <person name="Carrere S."/>
            <person name="Blein T."/>
            <person name="Jardinaud M.F."/>
            <person name="Latrasse D."/>
            <person name="Zouine M."/>
            <person name="Zahm M."/>
            <person name="Kreplak J."/>
            <person name="Mayjonade B."/>
            <person name="Satge C."/>
            <person name="Perez M."/>
            <person name="Cauet S."/>
            <person name="Marande W."/>
            <person name="Chantry-Darmon C."/>
            <person name="Lopez-Roques C."/>
            <person name="Bouchez O."/>
            <person name="Berard A."/>
            <person name="Debelle F."/>
            <person name="Munos S."/>
            <person name="Bendahmane A."/>
            <person name="Berges H."/>
            <person name="Niebel A."/>
            <person name="Buitink J."/>
            <person name="Frugier F."/>
            <person name="Benhamed M."/>
            <person name="Crespi M."/>
            <person name="Gouzy J."/>
            <person name="Gamas P."/>
        </authorList>
    </citation>
    <scope>NUCLEOTIDE SEQUENCE [LARGE SCALE GENOMIC DNA]</scope>
    <source>
        <strain>cv. Jemalong A17</strain>
    </source>
</reference>
<reference key="5">
    <citation type="journal article" date="2010" name="Mol. Plant Microbe Interact.">
        <title>Transcription of two blue copper-binding protein isogenes is highly correlated with arbuscular mycorrhizal development in Medicago truncatula.</title>
        <authorList>
            <person name="Paradi I."/>
            <person name="van Tuinen D."/>
            <person name="Morandi D."/>
            <person name="Ochatt S."/>
            <person name="Robert F."/>
            <person name="Jacas L."/>
            <person name="Dumas-Gaudot E."/>
        </authorList>
    </citation>
    <scope>INDUCTION BY GLOMUS INTRARADICES</scope>
    <source>
        <strain>cv. Jemalong J5</strain>
    </source>
</reference>
<reference key="6">
    <citation type="journal article" date="2015" name="Plant Cell">
        <title>Suppression of arbuscule degeneration in Medicago truncatula phosphate transporter4 mutants is dependent on the ammonium transporter 2 family protein AMT2;3.</title>
        <authorList>
            <person name="Breuillin-Sessoms F."/>
            <person name="Floss D.S."/>
            <person name="Gomez S.K."/>
            <person name="Pumplin N."/>
            <person name="Ding Y."/>
            <person name="Levesque-Tremblay V."/>
            <person name="Noar R.D."/>
            <person name="Daniels D.A."/>
            <person name="Bravo A."/>
            <person name="Eaglesham J.B."/>
            <person name="Benedito V.A."/>
            <person name="Udvardi M.K."/>
            <person name="Harrison M.J."/>
        </authorList>
    </citation>
    <scope>FUNCTION</scope>
    <scope>DISRUPTION PHENOTYPE</scope>
    <scope>INDUCTION BY ARBUSCULAR MYCORRHIZAL FUNGI</scope>
    <source>
        <strain>cv. Jemalong A17</strain>
    </source>
</reference>
<reference key="7">
    <citation type="journal article" date="2015" name="Plant Physiol.">
        <title>Hyphal branching during arbuscule development requires reduced arbuscular mycorrhiza1.</title>
        <authorList>
            <person name="Park H.-J."/>
            <person name="Floss D.S."/>
            <person name="Levesque-Tremblay V."/>
            <person name="Bravo A."/>
            <person name="Harrison M.J."/>
        </authorList>
    </citation>
    <scope>INDUCTION BY RAM1 AND GLOMUS VERSIFORME</scope>
</reference>
<reference key="8">
    <citation type="journal article" date="2016" name="Plant Cell Environ.">
        <title>The phosphate transporters LjPT4 and MtPT4 mediate early root responses to phosphate status in non mycorrhizal roots.</title>
        <authorList>
            <person name="Volpe V."/>
            <person name="Giovannetti M."/>
            <person name="Sun X.-G."/>
            <person name="Fiorilli V."/>
            <person name="Bonfante P."/>
        </authorList>
    </citation>
    <scope>FUNCTION</scope>
    <scope>DISRUPTION PHENOTYPE</scope>
    <scope>TISSUE SPECIFICITY</scope>
    <source>
        <strain>cv. Jemalong A17</strain>
    </source>
</reference>
<sequence length="528" mass="58923">MGLEVLEALDSARTQWYHVTAIVIAGMGFFTDAYDLFCISTVSKLLGRLYYFDPSTNKPGKLPPSVNNVVTGVALVGTLSGQLVFGWLGDKLGRKKVYGVTLIIMVACAICSGLSFGSSAKSVMITLCFFRFWLGFGIGGDYPLSATIMSEYANKRTRGAFIAAVFAMQGVGIIFAGLVSMVFSGIFKAYYQAPRFNEDPILSTQPEGDLLWRLILMIGAVPAAMTYYWRMKMPETGRYTAIVEGNAKQAAADMARVLDIEIIAEQDKLAEFKAANDYPLWSSEFFNRHGRHLIGTMSCWFLLDIAFYSQNLTQKDIYPAMGLIRQDKEMNAIDEVFQTSRAMFVVALFGTFPGYWFTVFFIEKLGRFKIQLVGFFMMSFFMFVIGVKYEYLKDENKNLFALLYGLTFFFANFGPNSTTFVLPAELFPTRVRSTCHAFSAASGKAGAMVGAFGIQYYTLDGTPRKIRRAMMILAFTNLIGFFCTFLVTETKGRSLEEISGEDGRESELTATPNDRAPGIRQDSRTEKM</sequence>
<comment type="function">
    <text evidence="3 5 6">Low-affinity transporter for external inorganic phosphate (Pi) probably involved in the acquisition of phosphate released by arbuscular mycorrhizal (AM) fungi (e.g. Gigaspora gigantea, Glomus versiforme and G.intraradices) during AM symbiosis; required for propper mycorrhizal arbuscule morphology (PubMed:12368495, PubMed:25841038). Acts as a Pi-sensing machinery at the root tip level, independently of AM fungi, involved in the regulation of early root branching and lateral roots formation (PubMed:26476189).</text>
</comment>
<comment type="catalytic activity">
    <reaction evidence="3">
        <text>phosphate(in) + H(+)(in) = phosphate(out) + H(+)(out)</text>
        <dbReference type="Rhea" id="RHEA:29939"/>
        <dbReference type="ChEBI" id="CHEBI:15378"/>
        <dbReference type="ChEBI" id="CHEBI:43474"/>
    </reaction>
    <physiologicalReaction direction="right-to-left" evidence="9">
        <dbReference type="Rhea" id="RHEA:29941"/>
    </physiologicalReaction>
</comment>
<comment type="biophysicochemical properties">
    <kinetics>
        <KM evidence="10">500 uM for inorganic phosphate</KM>
    </kinetics>
    <phDependence>
        <text evidence="3">Optimum pH is 3-4.</text>
    </phDependence>
</comment>
<comment type="subcellular location">
    <subcellularLocation>
        <location evidence="3">Cell membrane</location>
        <topology evidence="1">Multi-pass membrane protein</topology>
    </subcellularLocation>
    <text evidence="3">Present on the periarbuscular membrane in cells containing arbuscules during arbuscular mycorrhizal (AM) symbiosis with AM fungi (e.g. Gigaspora gigantea, Glomus versiforme and G.intraradices).</text>
</comment>
<comment type="tissue specificity">
    <text evidence="3 6">Mostly expressed in mycorrhizal roots (PubMed:12368495). Also observed in root tips of non-mycorrhizal roots, in a phosphate (Pi) depended-manner, highest expression levels being observed in low Pi conditions (PubMed:26476189).</text>
</comment>
<comment type="developmental stage">
    <text evidence="5">Expressed in cortical cells containing arbuscules of mycorrhizal roots upon arbuscular mycorrhizal (AM) symbiosis with AM fungi (e.g. Gigaspora gigantea, Glomus versiforme and G.intraradices).</text>
</comment>
<comment type="induction">
    <text evidence="4 5 6 7">Accumulates in roots, in a RAM1-dependent manner, during colonization by arbuscular mycorrhizal (AM) fungi (e.g. Gigaspora gigantea, Glomus versiforme and G.intraradices) (PubMed:20687807, PubMed:25841038, PubMed:26511916). Induced in root tips by low phosphate (Pi) levels (PubMed:26476189).</text>
</comment>
<comment type="disruption phenotype">
    <text evidence="5 6">Impaired phosphate (Pi) starvation induction of lateral roots formation (PubMed:26476189). Plants missing PT4 or both PT4 and PT8 fail to establish arbuscular mycorrhizal (AM) symbiosis with AM fungi in high nitrogen conditions, leading to premature arbuscule degeneration (PAD); these phenotypes are suppressed in nitrogen-deprived conditions in an AMT2-3-dependent manner (PubMed:25841038).</text>
</comment>
<comment type="miscellaneous">
    <text evidence="9">Although related to the sugar transporter family, it does not transport sugars.</text>
</comment>
<comment type="similarity">
    <text evidence="9">Belongs to the major facilitator superfamily. Phosphate:H(+) symporter (TC 2.A.1.9) family.</text>
</comment>
<name>PHT14_MEDTR</name>
<evidence type="ECO:0000255" key="1"/>
<evidence type="ECO:0000256" key="2">
    <source>
        <dbReference type="SAM" id="MobiDB-lite"/>
    </source>
</evidence>
<evidence type="ECO:0000269" key="3">
    <source>
    </source>
</evidence>
<evidence type="ECO:0000269" key="4">
    <source>
    </source>
</evidence>
<evidence type="ECO:0000269" key="5">
    <source>
    </source>
</evidence>
<evidence type="ECO:0000269" key="6">
    <source>
    </source>
</evidence>
<evidence type="ECO:0000269" key="7">
    <source>
    </source>
</evidence>
<evidence type="ECO:0000303" key="8">
    <source>
    </source>
</evidence>
<evidence type="ECO:0000305" key="9"/>
<evidence type="ECO:0000305" key="10">
    <source>
    </source>
</evidence>
<evidence type="ECO:0000312" key="11">
    <source>
        <dbReference type="EMBL" id="KEH40422.1"/>
    </source>
</evidence>
<evidence type="ECO:0000312" key="12">
    <source>
        <dbReference type="EMBL" id="RHN77834.1"/>
    </source>
</evidence>